<feature type="signal peptide" evidence="1">
    <location>
        <begin position="1"/>
        <end position="19"/>
    </location>
</feature>
<feature type="chain" id="PRO_0000436661" description="Envelope glycoprotein H" evidence="1">
    <location>
        <begin position="20"/>
        <end position="725"/>
    </location>
</feature>
<feature type="topological domain" description="Virion surface" evidence="1">
    <location>
        <begin position="20"/>
        <end position="700"/>
    </location>
</feature>
<feature type="transmembrane region" description="Helical" evidence="1">
    <location>
        <begin position="701"/>
        <end position="721"/>
    </location>
</feature>
<feature type="topological domain" description="Intravirion" evidence="1">
    <location>
        <begin position="722"/>
        <end position="725"/>
    </location>
</feature>
<feature type="region of interest" description="Interaction with gL" evidence="1">
    <location>
        <begin position="184"/>
        <end position="247"/>
    </location>
</feature>
<feature type="glycosylation site" description="N-linked (GlcNAc...) asparagine; by host" evidence="1">
    <location>
        <position position="38"/>
    </location>
</feature>
<feature type="glycosylation site" description="N-linked (GlcNAc...) asparagine; by host" evidence="1">
    <location>
        <position position="50"/>
    </location>
</feature>
<feature type="glycosylation site" description="N-linked (GlcNAc...) asparagine; by host" evidence="1">
    <location>
        <position position="319"/>
    </location>
</feature>
<feature type="glycosylation site" description="N-linked (GlcNAc...) asparagine; by host" evidence="1">
    <location>
        <position position="459"/>
    </location>
</feature>
<feature type="glycosylation site" description="N-linked (GlcNAc...) asparagine; by host" evidence="1">
    <location>
        <position position="621"/>
    </location>
</feature>
<feature type="glycosylation site" description="N-linked (GlcNAc...) asparagine; by host" evidence="1">
    <location>
        <position position="681"/>
    </location>
</feature>
<feature type="sequence conflict" description="In Ref. 2; BAA00984." evidence="2" ref="2">
    <original>T</original>
    <variation>S</variation>
    <location>
        <position position="321"/>
    </location>
</feature>
<feature type="sequence conflict" description="In Ref. 2; BAA00984." evidence="2" ref="2">
    <original>LTEK</original>
    <variation>IAAN</variation>
    <location>
        <begin position="367"/>
        <end position="370"/>
    </location>
</feature>
<feature type="sequence conflict" description="In Ref. 2; BAA00984." evidence="2" ref="2">
    <original>AHSSNA</original>
    <variation>TKPSNS</variation>
    <location>
        <begin position="374"/>
        <end position="379"/>
    </location>
</feature>
<feature type="sequence conflict" description="In Ref. 2; BAA00984." evidence="2" ref="2">
    <original>ALMESAHRPERR</original>
    <variation>GPDGVGAPSGET</variation>
    <location>
        <begin position="517"/>
        <end position="528"/>
    </location>
</feature>
<feature type="sequence conflict" description="In Ref. 2; BAA00984." evidence="2" ref="2">
    <original>SPCVLSRSYRER</original>
    <variation>APASCRGATAN</variation>
    <location>
        <begin position="602"/>
        <end position="613"/>
    </location>
</feature>
<feature type="sequence conflict" description="In Ref. 2; BAA00984." evidence="2" ref="2">
    <original>E</original>
    <variation>D</variation>
    <location>
        <position position="663"/>
    </location>
</feature>
<evidence type="ECO:0000255" key="1">
    <source>
        <dbReference type="HAMAP-Rule" id="MF_04033"/>
    </source>
</evidence>
<evidence type="ECO:0000305" key="2"/>
<reference key="1">
    <citation type="journal article" date="1994" name="J. Gen. Virol.">
        <title>Expression of the murine cytomegalovirus glycoprotein H by recombinant vaccinia virus.</title>
        <authorList>
            <person name="Rapp M."/>
            <person name="Lucin P."/>
            <person name="Messerle M."/>
            <person name="Loh L.C."/>
            <person name="Koszinowski U.H."/>
        </authorList>
    </citation>
    <scope>NUCLEOTIDE SEQUENCE [GENOMIC DNA]</scope>
</reference>
<reference key="2">
    <citation type="journal article" date="1992" name="J. Gen. Virol.">
        <title>Identification of the glycoprotein H gene of murine cytomegalovirus.</title>
        <authorList>
            <person name="Xu J."/>
            <person name="Dallas P.B."/>
            <person name="Lyons P.A."/>
            <person name="Shellam G.R."/>
            <person name="Scalzo A.A."/>
        </authorList>
    </citation>
    <scope>NUCLEOTIDE SEQUENCE [GENOMIC DNA]</scope>
</reference>
<reference key="3">
    <citation type="journal article" date="1996" name="J. Virol.">
        <title>Analysis of the complete DNA sequence of murine cytomegalovirus.</title>
        <authorList>
            <person name="Rawlinson W.D."/>
            <person name="Farrell H.E."/>
            <person name="Barrell B.G."/>
        </authorList>
    </citation>
    <scope>NUCLEOTIDE SEQUENCE [LARGE SCALE GENOMIC DNA]</scope>
</reference>
<accession>P30673</accession>
<accession>Q07745</accession>
<protein>
    <recommendedName>
        <fullName evidence="1">Envelope glycoprotein H</fullName>
        <shortName evidence="1">gH</shortName>
    </recommendedName>
</protein>
<proteinExistence type="inferred from homology"/>
<name>GH_MUHVS</name>
<organism>
    <name type="scientific">Murid herpesvirus 1 (strain Smith)</name>
    <name type="common">MuHV-1</name>
    <name type="synonym">Mouse cytomegalovirus</name>
    <dbReference type="NCBI Taxonomy" id="10367"/>
    <lineage>
        <taxon>Viruses</taxon>
        <taxon>Duplodnaviria</taxon>
        <taxon>Heunggongvirae</taxon>
        <taxon>Peploviricota</taxon>
        <taxon>Herviviricetes</taxon>
        <taxon>Herpesvirales</taxon>
        <taxon>Orthoherpesviridae</taxon>
        <taxon>Betaherpesvirinae</taxon>
        <taxon>Muromegalovirus</taxon>
        <taxon>Muromegalovirus muridbeta1</taxon>
        <taxon>Murid herpesvirus 1</taxon>
    </lineage>
</organism>
<gene>
    <name evidence="1" type="primary">gH</name>
    <name type="synonym">UL75</name>
</gene>
<sequence length="725" mass="81314">MKLSLILSIALCSTRVVYAAGAEAPRISRNTVKLHSYNESRVCRHDESSNQTVSHAAMFTFNFQDGDGYRVYQVPRCLFNTHAAREVLSSVDMTETLESYRKRFRVYFVVPIYGAYRLVARSPTAKYPGGVLNPPPASSVTMQDLIVDATNIHTVVPDKLCVITEHPVIFSMKVPCSHQVITWTGYTVTVSLAQKFFVLTIKPTRDHTSENTLAMFFGDVREVDLKAPYTVGAFLLRQTPDHDLLVVVKQTAFIQRYMFLTDVVFLQRTLSADYADTSVCLRVLSVLASVVARGKQCGLITRDTVEFFFTYSLCQLMANGTRYQSTAPVSTALWRQSELELFGEFIRHCFKTTTPNPTPAFQTRMQLTEKHKPAHSSNAIDVRVLAATYSSGMHAASMADLAFLLRSTRIPPNVNTDALLQKLLFTTDAYYRMSLKIPLSGSMRRILIRVDLTVRTQLNESSVARRHFVLLTSMCSPREQISWGELLMNPQRGAPSEIYSPCVSGGRRDYTGPSVRALMESAHRPERRAEQVMSVTEALRPKRSQMSDEANCVPDSTQGAVITANEKTYLISSDFIVKGLAIPVSNTVVDRNLMITVLDRRSPCVLSRSYRERGSVIVMNNITFTERCEFCASTLVEYDEVDGLTSIMHIPSIEVLKYLTDPENDILVATPRVHYLLLTANGTVFEVTDILVNVRPSMPYSVVVALVIIAILMALGLYRLCRQKR</sequence>
<organismHost>
    <name type="scientific">Mus musculus</name>
    <name type="common">Mouse</name>
    <dbReference type="NCBI Taxonomy" id="10090"/>
</organismHost>
<comment type="function">
    <text evidence="1">The heterodimer glycoprotein H-glycoprotein L is required for the fusion of viral and plasma membranes leading to virus entry into the host cell. Following initial binding to host receptor, membrane fusion is mediated by the fusion machinery composed of gB and the heterodimer gH/gL. May also be involved in the fusion between the virion envelope and the outer nuclear membrane during virion morphogenesis.</text>
</comment>
<comment type="subunit">
    <text evidence="1">Interacts with glycoprotein L (gL); this interaction is necessary for the correct processing and cell surface expression of gH. The heterodimer gH/gL seems to interact with gB trimers during fusion.</text>
</comment>
<comment type="subcellular location">
    <subcellularLocation>
        <location evidence="1">Virion membrane</location>
        <topology evidence="1">Single-pass type I membrane protein</topology>
    </subcellularLocation>
    <subcellularLocation>
        <location evidence="1">Host cell membrane</location>
        <topology evidence="1">Single-pass type I membrane protein</topology>
    </subcellularLocation>
    <subcellularLocation>
        <location evidence="1">Host endosome membrane</location>
        <topology evidence="1">Single-pass type I membrane protein</topology>
    </subcellularLocation>
    <text evidence="1">During virion morphogenesis, this protein probably accumulates in the endosomes and trans-Golgi where secondary envelopment occurs. It is probably transported to the cell surface from where it is endocytosed and directed to the trans-Golgi network (TGN).</text>
</comment>
<comment type="PTM">
    <text evidence="1">N-glycosylated, O-glycosylated, and sialylated.</text>
</comment>
<comment type="similarity">
    <text evidence="1">Belongs to the herpesviridae glycoprotein H family.</text>
</comment>
<dbReference type="EMBL" id="L18782">
    <property type="protein sequence ID" value="AAA20190.1"/>
    <property type="molecule type" value="Unassigned_DNA"/>
</dbReference>
<dbReference type="EMBL" id="D10089">
    <property type="protein sequence ID" value="BAA00984.1"/>
    <property type="molecule type" value="Genomic_DNA"/>
</dbReference>
<dbReference type="EMBL" id="U68299">
    <property type="status" value="NOT_ANNOTATED_CDS"/>
    <property type="molecule type" value="Genomic_DNA"/>
</dbReference>
<dbReference type="PIR" id="JQ1622">
    <property type="entry name" value="JQ1622"/>
</dbReference>
<dbReference type="SMR" id="P30673"/>
<dbReference type="GlyCosmos" id="P30673">
    <property type="glycosylation" value="6 sites, No reported glycans"/>
</dbReference>
<dbReference type="Proteomes" id="UP000008774">
    <property type="component" value="Segment"/>
</dbReference>
<dbReference type="GO" id="GO:0044175">
    <property type="term" value="C:host cell endosome membrane"/>
    <property type="evidence" value="ECO:0007669"/>
    <property type="project" value="UniProtKB-SubCell"/>
</dbReference>
<dbReference type="GO" id="GO:0020002">
    <property type="term" value="C:host cell plasma membrane"/>
    <property type="evidence" value="ECO:0007669"/>
    <property type="project" value="UniProtKB-SubCell"/>
</dbReference>
<dbReference type="GO" id="GO:0016020">
    <property type="term" value="C:membrane"/>
    <property type="evidence" value="ECO:0007669"/>
    <property type="project" value="UniProtKB-KW"/>
</dbReference>
<dbReference type="GO" id="GO:0019031">
    <property type="term" value="C:viral envelope"/>
    <property type="evidence" value="ECO:0007669"/>
    <property type="project" value="UniProtKB-KW"/>
</dbReference>
<dbReference type="GO" id="GO:0055036">
    <property type="term" value="C:virion membrane"/>
    <property type="evidence" value="ECO:0007669"/>
    <property type="project" value="UniProtKB-SubCell"/>
</dbReference>
<dbReference type="GO" id="GO:0019064">
    <property type="term" value="P:fusion of virus membrane with host plasma membrane"/>
    <property type="evidence" value="ECO:0007669"/>
    <property type="project" value="UniProtKB-KW"/>
</dbReference>
<dbReference type="GO" id="GO:0046718">
    <property type="term" value="P:symbiont entry into host cell"/>
    <property type="evidence" value="ECO:0007669"/>
    <property type="project" value="UniProtKB-KW"/>
</dbReference>
<dbReference type="Gene3D" id="2.60.40.3190">
    <property type="entry name" value="Herpesvirus glycoprotein H, C-terminal domain"/>
    <property type="match status" value="1"/>
</dbReference>
<dbReference type="HAMAP" id="MF_04033">
    <property type="entry name" value="HSV_GH"/>
    <property type="match status" value="1"/>
</dbReference>
<dbReference type="InterPro" id="IPR003493">
    <property type="entry name" value="Herpes_gH"/>
</dbReference>
<dbReference type="InterPro" id="IPR035305">
    <property type="entry name" value="Herpes_glycoH_C"/>
</dbReference>
<dbReference type="InterPro" id="IPR038172">
    <property type="entry name" value="Herpes_glycoH_C_sf"/>
</dbReference>
<dbReference type="Pfam" id="PF17488">
    <property type="entry name" value="Herpes_glycoH_C"/>
    <property type="match status" value="1"/>
</dbReference>
<dbReference type="Pfam" id="PF02489">
    <property type="entry name" value="Herpes_glycop_H"/>
    <property type="match status" value="1"/>
</dbReference>
<keyword id="KW-1169">Fusion of virus membrane with host cell membrane</keyword>
<keyword id="KW-1168">Fusion of virus membrane with host membrane</keyword>
<keyword id="KW-0325">Glycoprotein</keyword>
<keyword id="KW-1032">Host cell membrane</keyword>
<keyword id="KW-1039">Host endosome</keyword>
<keyword id="KW-1043">Host membrane</keyword>
<keyword id="KW-0472">Membrane</keyword>
<keyword id="KW-1185">Reference proteome</keyword>
<keyword id="KW-0730">Sialic acid</keyword>
<keyword id="KW-0732">Signal</keyword>
<keyword id="KW-0812">Transmembrane</keyword>
<keyword id="KW-1133">Transmembrane helix</keyword>
<keyword id="KW-0261">Viral envelope protein</keyword>
<keyword id="KW-1162">Viral penetration into host cytoplasm</keyword>
<keyword id="KW-0946">Virion</keyword>
<keyword id="KW-1160">Virus entry into host cell</keyword>